<comment type="interaction">
    <interactant intactId="EBI-12105500">
        <id>Q63HM9</id>
    </interactant>
    <interactant intactId="EBI-739552">
        <id>P43364</id>
        <label>MAGEA11</label>
    </interactant>
    <organismsDiffer>false</organismsDiffer>
    <experiments>3</experiments>
</comment>
<comment type="interaction">
    <interactant intactId="EBI-12105500">
        <id>Q63HM9</id>
    </interactant>
    <interactant intactId="EBI-395883">
        <id>P07237</id>
        <label>P4HB</label>
    </interactant>
    <organismsDiffer>false</organismsDiffer>
    <experiments>3</experiments>
</comment>
<comment type="subcellular location">
    <subcellularLocation>
        <location evidence="2">Cytoplasm</location>
    </subcellularLocation>
</comment>
<comment type="tissue specificity">
    <text evidence="2">Expressed at highest levels in heart. Also detected in kidney, lung, small intestine and colon. Expressed at very low levels, if any, in leukocytes, thymus and skeletal muscle.</text>
</comment>
<dbReference type="EMBL" id="BX648329">
    <property type="protein sequence ID" value="CAH56150.1"/>
    <property type="molecule type" value="mRNA"/>
</dbReference>
<dbReference type="EMBL" id="AC008830">
    <property type="status" value="NOT_ANNOTATED_CDS"/>
    <property type="molecule type" value="Genomic_DNA"/>
</dbReference>
<dbReference type="CCDS" id="CCDS34150.1"/>
<dbReference type="RefSeq" id="NP_001005473.1">
    <property type="nucleotide sequence ID" value="NM_001005473.3"/>
</dbReference>
<dbReference type="SMR" id="Q63HM9"/>
<dbReference type="BioGRID" id="131355">
    <property type="interactions" value="3"/>
</dbReference>
<dbReference type="FunCoup" id="Q63HM9">
    <property type="interactions" value="22"/>
</dbReference>
<dbReference type="IntAct" id="Q63HM9">
    <property type="interactions" value="3"/>
</dbReference>
<dbReference type="STRING" id="9606.ENSP00000367032"/>
<dbReference type="DrugBank" id="DB04339">
    <property type="generic name" value="Carbocisteine"/>
</dbReference>
<dbReference type="GlyConnect" id="1606">
    <property type="glycosylation" value="1 N-Linked glycan (1 site)"/>
</dbReference>
<dbReference type="GlyCosmos" id="Q63HM9">
    <property type="glycosylation" value="1 site, 1 glycan"/>
</dbReference>
<dbReference type="GlyGen" id="Q63HM9">
    <property type="glycosylation" value="2 sites, 1 N-linked glycan (1 site), 1 O-linked glycan (1 site)"/>
</dbReference>
<dbReference type="iPTMnet" id="Q63HM9"/>
<dbReference type="PhosphoSitePlus" id="Q63HM9"/>
<dbReference type="BioMuta" id="PLCXD3"/>
<dbReference type="DMDM" id="229462782"/>
<dbReference type="MassIVE" id="Q63HM9"/>
<dbReference type="PaxDb" id="9606-ENSP00000367032"/>
<dbReference type="PeptideAtlas" id="Q63HM9"/>
<dbReference type="ProteomicsDB" id="65882"/>
<dbReference type="Pumba" id="Q63HM9"/>
<dbReference type="Antibodypedia" id="23204">
    <property type="antibodies" value="27 antibodies from 10 providers"/>
</dbReference>
<dbReference type="DNASU" id="345557"/>
<dbReference type="Ensembl" id="ENST00000377801.8">
    <property type="protein sequence ID" value="ENSP00000367032.3"/>
    <property type="gene ID" value="ENSG00000182836.11"/>
</dbReference>
<dbReference type="GeneID" id="345557"/>
<dbReference type="KEGG" id="hsa:345557"/>
<dbReference type="MANE-Select" id="ENST00000377801.8">
    <property type="protein sequence ID" value="ENSP00000367032.3"/>
    <property type="RefSeq nucleotide sequence ID" value="NM_001005473.3"/>
    <property type="RefSeq protein sequence ID" value="NP_001005473.1"/>
</dbReference>
<dbReference type="UCSC" id="uc003jmm.2">
    <property type="organism name" value="human"/>
</dbReference>
<dbReference type="AGR" id="HGNC:31822"/>
<dbReference type="CTD" id="345557"/>
<dbReference type="DisGeNET" id="345557"/>
<dbReference type="GeneCards" id="PLCXD3"/>
<dbReference type="HGNC" id="HGNC:31822">
    <property type="gene designation" value="PLCXD3"/>
</dbReference>
<dbReference type="HPA" id="ENSG00000182836">
    <property type="expression patterns" value="Group enriched (adrenal gland, brain, heart muscle, ovary)"/>
</dbReference>
<dbReference type="MIM" id="617016">
    <property type="type" value="gene"/>
</dbReference>
<dbReference type="neXtProt" id="NX_Q63HM9"/>
<dbReference type="OpenTargets" id="ENSG00000182836"/>
<dbReference type="PharmGKB" id="PA134886053"/>
<dbReference type="VEuPathDB" id="HostDB:ENSG00000182836"/>
<dbReference type="eggNOG" id="KOG4306">
    <property type="taxonomic scope" value="Eukaryota"/>
</dbReference>
<dbReference type="GeneTree" id="ENSGT00940000158747"/>
<dbReference type="HOGENOM" id="CLU_051926_0_0_1"/>
<dbReference type="InParanoid" id="Q63HM9"/>
<dbReference type="OMA" id="ALPAMMH"/>
<dbReference type="OrthoDB" id="1046782at2759"/>
<dbReference type="PAN-GO" id="Q63HM9">
    <property type="GO annotations" value="2 GO annotations based on evolutionary models"/>
</dbReference>
<dbReference type="PhylomeDB" id="Q63HM9"/>
<dbReference type="TreeFam" id="TF314457"/>
<dbReference type="PathwayCommons" id="Q63HM9"/>
<dbReference type="SignaLink" id="Q63HM9"/>
<dbReference type="BioGRID-ORCS" id="345557">
    <property type="hits" value="2 hits in 1141 CRISPR screens"/>
</dbReference>
<dbReference type="ChiTaRS" id="PLCXD3">
    <property type="organism name" value="human"/>
</dbReference>
<dbReference type="GenomeRNAi" id="345557"/>
<dbReference type="Pharos" id="Q63HM9">
    <property type="development level" value="Tdark"/>
</dbReference>
<dbReference type="PRO" id="PR:Q63HM9"/>
<dbReference type="Proteomes" id="UP000005640">
    <property type="component" value="Chromosome 5"/>
</dbReference>
<dbReference type="RNAct" id="Q63HM9">
    <property type="molecule type" value="protein"/>
</dbReference>
<dbReference type="Bgee" id="ENSG00000182836">
    <property type="expression patterns" value="Expressed in left ventricle myocardium and 140 other cell types or tissues"/>
</dbReference>
<dbReference type="GO" id="GO:0005737">
    <property type="term" value="C:cytoplasm"/>
    <property type="evidence" value="ECO:0007669"/>
    <property type="project" value="UniProtKB-SubCell"/>
</dbReference>
<dbReference type="GO" id="GO:0045202">
    <property type="term" value="C:synapse"/>
    <property type="evidence" value="ECO:0000318"/>
    <property type="project" value="GO_Central"/>
</dbReference>
<dbReference type="GO" id="GO:0008081">
    <property type="term" value="F:phosphoric diester hydrolase activity"/>
    <property type="evidence" value="ECO:0000318"/>
    <property type="project" value="GO_Central"/>
</dbReference>
<dbReference type="GO" id="GO:0016042">
    <property type="term" value="P:lipid catabolic process"/>
    <property type="evidence" value="ECO:0007669"/>
    <property type="project" value="UniProtKB-KW"/>
</dbReference>
<dbReference type="GO" id="GO:0007165">
    <property type="term" value="P:signal transduction"/>
    <property type="evidence" value="ECO:0007669"/>
    <property type="project" value="UniProtKB-KW"/>
</dbReference>
<dbReference type="CDD" id="cd08616">
    <property type="entry name" value="PI-PLCXD1c"/>
    <property type="match status" value="1"/>
</dbReference>
<dbReference type="FunFam" id="3.20.20.190:FF:000021">
    <property type="entry name" value="PI-PLC X domain-containing protein 3"/>
    <property type="match status" value="1"/>
</dbReference>
<dbReference type="Gene3D" id="3.20.20.190">
    <property type="entry name" value="Phosphatidylinositol (PI) phosphodiesterase"/>
    <property type="match status" value="1"/>
</dbReference>
<dbReference type="InterPro" id="IPR051057">
    <property type="entry name" value="PI-PLC_domain"/>
</dbReference>
<dbReference type="InterPro" id="IPR017946">
    <property type="entry name" value="PLC-like_Pdiesterase_TIM-brl"/>
</dbReference>
<dbReference type="InterPro" id="IPR042158">
    <property type="entry name" value="PLCXD1/2/3"/>
</dbReference>
<dbReference type="InterPro" id="IPR000909">
    <property type="entry name" value="PLipase_C_PInositol-sp_X_dom"/>
</dbReference>
<dbReference type="PANTHER" id="PTHR13593">
    <property type="match status" value="1"/>
</dbReference>
<dbReference type="PANTHER" id="PTHR13593:SF33">
    <property type="entry name" value="PI-PLC X DOMAIN-CONTAINING PROTEIN 3"/>
    <property type="match status" value="1"/>
</dbReference>
<dbReference type="Pfam" id="PF00388">
    <property type="entry name" value="PI-PLC-X"/>
    <property type="match status" value="1"/>
</dbReference>
<dbReference type="SMART" id="SM00148">
    <property type="entry name" value="PLCXc"/>
    <property type="match status" value="1"/>
</dbReference>
<dbReference type="SUPFAM" id="SSF51695">
    <property type="entry name" value="PLC-like phosphodiesterases"/>
    <property type="match status" value="1"/>
</dbReference>
<dbReference type="PROSITE" id="PS50007">
    <property type="entry name" value="PIPLC_X_DOMAIN"/>
    <property type="match status" value="1"/>
</dbReference>
<gene>
    <name type="primary">PLCXD3</name>
</gene>
<feature type="chain" id="PRO_0000305693" description="PI-PLC X domain-containing protein 3">
    <location>
        <begin position="1"/>
        <end position="321"/>
    </location>
</feature>
<feature type="domain" description="PI-PLC X-box" evidence="1">
    <location>
        <begin position="22"/>
        <end position="197"/>
    </location>
</feature>
<feature type="active site" evidence="1">
    <location>
        <position position="37"/>
    </location>
</feature>
<feature type="active site" evidence="1">
    <location>
        <position position="114"/>
    </location>
</feature>
<feature type="sequence conflict" description="In Ref. 1; CAH56150." evidence="3" ref="1">
    <original>I</original>
    <variation>T</variation>
    <location>
        <position position="174"/>
    </location>
</feature>
<sequence>MASSQGKNELKLADWMATLPESMHSIPLTNLAIPGSHDSFSFYIDEASPVGPEQPETVQNFVSVFGTVAKKLMRKWLATQTMNFTGQLGAGIRYFDLRISTKPRDPDNELYFAHGLFSAKVNEGLEEINAFLTDHHKEVVFLDFNHFYGMQKYHHEKLVQMLKDIYGNKMCPAIFAQEVSLKYLWEKDYQVLVFYHSPVALEVPFLWPGQMMPAPWANTTDPEKLIQFLQASITERRKKGSFFISQVVLTPKASTVVKGVASGLRETITERALPAMMQWVRTQKPGESGINIVTADFVELGDFISTVIKLNYVFDEGEANT</sequence>
<proteinExistence type="evidence at protein level"/>
<accession>Q63HM9</accession>
<accession>A6NL04</accession>
<protein>
    <recommendedName>
        <fullName>PI-PLC X domain-containing protein 3</fullName>
    </recommendedName>
</protein>
<name>PLCX3_HUMAN</name>
<organism>
    <name type="scientific">Homo sapiens</name>
    <name type="common">Human</name>
    <dbReference type="NCBI Taxonomy" id="9606"/>
    <lineage>
        <taxon>Eukaryota</taxon>
        <taxon>Metazoa</taxon>
        <taxon>Chordata</taxon>
        <taxon>Craniata</taxon>
        <taxon>Vertebrata</taxon>
        <taxon>Euteleostomi</taxon>
        <taxon>Mammalia</taxon>
        <taxon>Eutheria</taxon>
        <taxon>Euarchontoglires</taxon>
        <taxon>Primates</taxon>
        <taxon>Haplorrhini</taxon>
        <taxon>Catarrhini</taxon>
        <taxon>Hominidae</taxon>
        <taxon>Homo</taxon>
    </lineage>
</organism>
<reference key="1">
    <citation type="journal article" date="2007" name="BMC Genomics">
        <title>The full-ORF clone resource of the German cDNA consortium.</title>
        <authorList>
            <person name="Bechtel S."/>
            <person name="Rosenfelder H."/>
            <person name="Duda A."/>
            <person name="Schmidt C.P."/>
            <person name="Ernst U."/>
            <person name="Wellenreuther R."/>
            <person name="Mehrle A."/>
            <person name="Schuster C."/>
            <person name="Bahr A."/>
            <person name="Bloecker H."/>
            <person name="Heubner D."/>
            <person name="Hoerlein A."/>
            <person name="Michel G."/>
            <person name="Wedler H."/>
            <person name="Koehrer K."/>
            <person name="Ottenwaelder B."/>
            <person name="Poustka A."/>
            <person name="Wiemann S."/>
            <person name="Schupp I."/>
        </authorList>
    </citation>
    <scope>NUCLEOTIDE SEQUENCE [LARGE SCALE MRNA]</scope>
    <source>
        <tissue>Uterine endothelium</tissue>
    </source>
</reference>
<reference key="2">
    <citation type="journal article" date="2004" name="Nature">
        <title>The DNA sequence and comparative analysis of human chromosome 5.</title>
        <authorList>
            <person name="Schmutz J."/>
            <person name="Martin J."/>
            <person name="Terry A."/>
            <person name="Couronne O."/>
            <person name="Grimwood J."/>
            <person name="Lowry S."/>
            <person name="Gordon L.A."/>
            <person name="Scott D."/>
            <person name="Xie G."/>
            <person name="Huang W."/>
            <person name="Hellsten U."/>
            <person name="Tran-Gyamfi M."/>
            <person name="She X."/>
            <person name="Prabhakar S."/>
            <person name="Aerts A."/>
            <person name="Altherr M."/>
            <person name="Bajorek E."/>
            <person name="Black S."/>
            <person name="Branscomb E."/>
            <person name="Caoile C."/>
            <person name="Challacombe J.F."/>
            <person name="Chan Y.M."/>
            <person name="Denys M."/>
            <person name="Detter J.C."/>
            <person name="Escobar J."/>
            <person name="Flowers D."/>
            <person name="Fotopulos D."/>
            <person name="Glavina T."/>
            <person name="Gomez M."/>
            <person name="Gonzales E."/>
            <person name="Goodstein D."/>
            <person name="Grigoriev I."/>
            <person name="Groza M."/>
            <person name="Hammon N."/>
            <person name="Hawkins T."/>
            <person name="Haydu L."/>
            <person name="Israni S."/>
            <person name="Jett J."/>
            <person name="Kadner K."/>
            <person name="Kimball H."/>
            <person name="Kobayashi A."/>
            <person name="Lopez F."/>
            <person name="Lou Y."/>
            <person name="Martinez D."/>
            <person name="Medina C."/>
            <person name="Morgan J."/>
            <person name="Nandkeshwar R."/>
            <person name="Noonan J.P."/>
            <person name="Pitluck S."/>
            <person name="Pollard M."/>
            <person name="Predki P."/>
            <person name="Priest J."/>
            <person name="Ramirez L."/>
            <person name="Retterer J."/>
            <person name="Rodriguez A."/>
            <person name="Rogers S."/>
            <person name="Salamov A."/>
            <person name="Salazar A."/>
            <person name="Thayer N."/>
            <person name="Tice H."/>
            <person name="Tsai M."/>
            <person name="Ustaszewska A."/>
            <person name="Vo N."/>
            <person name="Wheeler J."/>
            <person name="Wu K."/>
            <person name="Yang J."/>
            <person name="Dickson M."/>
            <person name="Cheng J.-F."/>
            <person name="Eichler E.E."/>
            <person name="Olsen A."/>
            <person name="Pennacchio L.A."/>
            <person name="Rokhsar D.S."/>
            <person name="Richardson P."/>
            <person name="Lucas S.M."/>
            <person name="Myers R.M."/>
            <person name="Rubin E.M."/>
        </authorList>
    </citation>
    <scope>NUCLEOTIDE SEQUENCE [LARGE SCALE GENOMIC DNA]</scope>
</reference>
<reference key="3">
    <citation type="journal article" date="2012" name="Biochem. Biophys. Res. Commun.">
        <title>Cloning, tissue distribution and sub-cellular localisation of phospholipase C X-domain containing protein (PLCXD) isoforms.</title>
        <authorList>
            <person name="Gellatly S.A."/>
            <person name="Kalujnaia S."/>
            <person name="Cramb G."/>
        </authorList>
    </citation>
    <scope>SUBCELLULAR LOCATION</scope>
    <scope>TISSUE SPECIFICITY</scope>
</reference>
<keyword id="KW-0963">Cytoplasm</keyword>
<keyword id="KW-0378">Hydrolase</keyword>
<keyword id="KW-0442">Lipid degradation</keyword>
<keyword id="KW-0443">Lipid metabolism</keyword>
<keyword id="KW-1267">Proteomics identification</keyword>
<keyword id="KW-1185">Reference proteome</keyword>
<keyword id="KW-0807">Transducer</keyword>
<evidence type="ECO:0000255" key="1">
    <source>
        <dbReference type="PROSITE-ProRule" id="PRU00270"/>
    </source>
</evidence>
<evidence type="ECO:0000269" key="2">
    <source>
    </source>
</evidence>
<evidence type="ECO:0000305" key="3"/>